<dbReference type="EC" id="1.14.17.3" evidence="6"/>
<dbReference type="EC" id="4.3.2.5" evidence="6"/>
<dbReference type="EMBL" id="M37721">
    <property type="protein sequence ID" value="AAA36414.1"/>
    <property type="molecule type" value="mRNA"/>
</dbReference>
<dbReference type="EMBL" id="S75037">
    <property type="protein sequence ID" value="AAB32775.1"/>
    <property type="molecule type" value="mRNA"/>
</dbReference>
<dbReference type="EMBL" id="S75038">
    <property type="protein sequence ID" value="AAB32776.1"/>
    <property type="molecule type" value="mRNA"/>
</dbReference>
<dbReference type="EMBL" id="AB095007">
    <property type="protein sequence ID" value="BAC22594.1"/>
    <property type="molecule type" value="mRNA"/>
</dbReference>
<dbReference type="EMBL" id="AK290158">
    <property type="protein sequence ID" value="BAF82847.1"/>
    <property type="molecule type" value="mRNA"/>
</dbReference>
<dbReference type="EMBL" id="BT007419">
    <property type="protein sequence ID" value="AAP36087.1"/>
    <property type="molecule type" value="mRNA"/>
</dbReference>
<dbReference type="EMBL" id="AC008779">
    <property type="status" value="NOT_ANNOTATED_CDS"/>
    <property type="molecule type" value="Genomic_DNA"/>
</dbReference>
<dbReference type="EMBL" id="AC010250">
    <property type="status" value="NOT_ANNOTATED_CDS"/>
    <property type="molecule type" value="Genomic_DNA"/>
</dbReference>
<dbReference type="EMBL" id="AC113373">
    <property type="status" value="NOT_ANNOTATED_CDS"/>
    <property type="molecule type" value="Genomic_DNA"/>
</dbReference>
<dbReference type="EMBL" id="CH471086">
    <property type="protein sequence ID" value="EAW49085.1"/>
    <property type="molecule type" value="Genomic_DNA"/>
</dbReference>
<dbReference type="EMBL" id="BC018127">
    <property type="protein sequence ID" value="AAH18127.1"/>
    <property type="molecule type" value="mRNA"/>
</dbReference>
<dbReference type="EMBL" id="AF010472">
    <property type="protein sequence ID" value="AAD01439.1"/>
    <property type="status" value="ALT_INIT"/>
    <property type="molecule type" value="mRNA"/>
</dbReference>
<dbReference type="EMBL" id="AF035320">
    <property type="protein sequence ID" value="AAB88190.1"/>
    <property type="molecule type" value="mRNA"/>
</dbReference>
<dbReference type="CCDS" id="CCDS4092.1">
    <molecule id="P19021-3"/>
</dbReference>
<dbReference type="CCDS" id="CCDS4093.1">
    <molecule id="P19021-2"/>
</dbReference>
<dbReference type="CCDS" id="CCDS4094.1">
    <molecule id="P19021-4"/>
</dbReference>
<dbReference type="CCDS" id="CCDS43348.1">
    <molecule id="P19021-5"/>
</dbReference>
<dbReference type="CCDS" id="CCDS54885.1">
    <molecule id="P19021-1"/>
</dbReference>
<dbReference type="CCDS" id="CCDS93753.1">
    <molecule id="P19021-6"/>
</dbReference>
<dbReference type="PIR" id="A35477">
    <property type="entry name" value="URHUAP"/>
</dbReference>
<dbReference type="RefSeq" id="NP_000910.2">
    <molecule id="P19021-5"/>
    <property type="nucleotide sequence ID" value="NM_000919.3"/>
</dbReference>
<dbReference type="RefSeq" id="NP_001170777.1">
    <molecule id="P19021-1"/>
    <property type="nucleotide sequence ID" value="NM_001177306.2"/>
</dbReference>
<dbReference type="RefSeq" id="NP_001306872.1">
    <property type="nucleotide sequence ID" value="NM_001319943.1"/>
</dbReference>
<dbReference type="RefSeq" id="NP_001351511.1">
    <molecule id="P19021-6"/>
    <property type="nucleotide sequence ID" value="NM_001364582.2"/>
</dbReference>
<dbReference type="RefSeq" id="NP_620121.1">
    <molecule id="P19021-3"/>
    <property type="nucleotide sequence ID" value="NM_138766.2"/>
</dbReference>
<dbReference type="RefSeq" id="NP_620176.1">
    <molecule id="P19021-2"/>
    <property type="nucleotide sequence ID" value="NM_138821.2"/>
</dbReference>
<dbReference type="RefSeq" id="NP_620177.1">
    <molecule id="P19021-4"/>
    <property type="nucleotide sequence ID" value="NM_138822.2"/>
</dbReference>
<dbReference type="RefSeq" id="XP_016864986.1">
    <molecule id="P19021-5"/>
    <property type="nucleotide sequence ID" value="XM_017009497.3"/>
</dbReference>
<dbReference type="RefSeq" id="XP_016864990.1">
    <property type="nucleotide sequence ID" value="XM_017009501.1"/>
</dbReference>
<dbReference type="RefSeq" id="XP_016864994.1">
    <molecule id="P19021-3"/>
    <property type="nucleotide sequence ID" value="XM_017009505.3"/>
</dbReference>
<dbReference type="RefSeq" id="XP_024301838.1">
    <molecule id="P19021-6"/>
    <property type="nucleotide sequence ID" value="XM_024446070.2"/>
</dbReference>
<dbReference type="RefSeq" id="XP_024301842.1">
    <molecule id="P19021-3"/>
    <property type="nucleotide sequence ID" value="XM_024446074.2"/>
</dbReference>
<dbReference type="RefSeq" id="XP_024301844.1">
    <molecule id="P19021-4"/>
    <property type="nucleotide sequence ID" value="XM_024446076.2"/>
</dbReference>
<dbReference type="RefSeq" id="XP_024301846.1">
    <molecule id="P19021-2"/>
    <property type="nucleotide sequence ID" value="XM_024446078.2"/>
</dbReference>
<dbReference type="RefSeq" id="XP_047273196.1">
    <molecule id="P19021-1"/>
    <property type="nucleotide sequence ID" value="XM_047417240.1"/>
</dbReference>
<dbReference type="RefSeq" id="XP_047273200.1">
    <molecule id="P19021-2"/>
    <property type="nucleotide sequence ID" value="XM_047417244.1"/>
</dbReference>
<dbReference type="RefSeq" id="XP_054208647.1">
    <molecule id="P19021-5"/>
    <property type="nucleotide sequence ID" value="XM_054352672.1"/>
</dbReference>
<dbReference type="RefSeq" id="XP_054208648.1">
    <molecule id="P19021-1"/>
    <property type="nucleotide sequence ID" value="XM_054352673.1"/>
</dbReference>
<dbReference type="RefSeq" id="XP_054208651.1">
    <molecule id="P19021-6"/>
    <property type="nucleotide sequence ID" value="XM_054352676.1"/>
</dbReference>
<dbReference type="RefSeq" id="XP_054208656.1">
    <molecule id="P19021-3"/>
    <property type="nucleotide sequence ID" value="XM_054352681.1"/>
</dbReference>
<dbReference type="RefSeq" id="XP_054208657.1">
    <molecule id="P19021-3"/>
    <property type="nucleotide sequence ID" value="XM_054352682.1"/>
</dbReference>
<dbReference type="RefSeq" id="XP_054208659.1">
    <molecule id="P19021-4"/>
    <property type="nucleotide sequence ID" value="XM_054352684.1"/>
</dbReference>
<dbReference type="RefSeq" id="XP_054208661.1">
    <molecule id="P19021-2"/>
    <property type="nucleotide sequence ID" value="XM_054352686.1"/>
</dbReference>
<dbReference type="RefSeq" id="XP_054208662.1">
    <molecule id="P19021-2"/>
    <property type="nucleotide sequence ID" value="XM_054352687.1"/>
</dbReference>
<dbReference type="SMR" id="P19021"/>
<dbReference type="BioGRID" id="111101">
    <property type="interactions" value="96"/>
</dbReference>
<dbReference type="CORUM" id="P19021"/>
<dbReference type="FunCoup" id="P19021">
    <property type="interactions" value="425"/>
</dbReference>
<dbReference type="IntAct" id="P19021">
    <property type="interactions" value="38"/>
</dbReference>
<dbReference type="STRING" id="9606.ENSP00000306100"/>
<dbReference type="BindingDB" id="P19021"/>
<dbReference type="ChEMBL" id="CHEMBL2544"/>
<dbReference type="DrugBank" id="DB00126">
    <property type="generic name" value="Ascorbic acid"/>
</dbReference>
<dbReference type="DrugBank" id="DB09130">
    <property type="generic name" value="Copper"/>
</dbReference>
<dbReference type="DrugBank" id="DB04150">
    <property type="generic name" value="N-alpha-Acetyl-3,5-diiodotyrosyl-D-threonine"/>
</dbReference>
<dbReference type="DrugBank" id="DB02598">
    <property type="generic name" value="N-Alpha-Acetyl-3,5-Diiodotyrosylglycine"/>
</dbReference>
<dbReference type="GlyCosmos" id="P19021">
    <property type="glycosylation" value="4 sites, 3 glycans"/>
</dbReference>
<dbReference type="GlyGen" id="P19021">
    <property type="glycosylation" value="9 sites, 4 O-linked glycans (8 sites)"/>
</dbReference>
<dbReference type="iPTMnet" id="P19021"/>
<dbReference type="PhosphoSitePlus" id="P19021"/>
<dbReference type="BioMuta" id="PAM"/>
<dbReference type="DMDM" id="23503036"/>
<dbReference type="jPOST" id="P19021"/>
<dbReference type="MassIVE" id="P19021"/>
<dbReference type="PaxDb" id="9606-ENSP00000306100"/>
<dbReference type="PeptideAtlas" id="P19021"/>
<dbReference type="ProteomicsDB" id="53622">
    <molecule id="P19021-1"/>
</dbReference>
<dbReference type="ProteomicsDB" id="53623">
    <molecule id="P19021-2"/>
</dbReference>
<dbReference type="ProteomicsDB" id="53624">
    <molecule id="P19021-3"/>
</dbReference>
<dbReference type="ProteomicsDB" id="53625">
    <molecule id="P19021-4"/>
</dbReference>
<dbReference type="ProteomicsDB" id="53626">
    <molecule id="P19021-5"/>
</dbReference>
<dbReference type="ProteomicsDB" id="53627">
    <molecule id="P19021-6"/>
</dbReference>
<dbReference type="Pumba" id="P19021"/>
<dbReference type="Antibodypedia" id="25194">
    <property type="antibodies" value="143 antibodies from 32 providers"/>
</dbReference>
<dbReference type="DNASU" id="5066"/>
<dbReference type="Ensembl" id="ENST00000346918.7">
    <molecule id="P19021-4"/>
    <property type="protein sequence ID" value="ENSP00000282992.3"/>
    <property type="gene ID" value="ENSG00000145730.21"/>
</dbReference>
<dbReference type="Ensembl" id="ENST00000348126.7">
    <molecule id="P19021-2"/>
    <property type="protein sequence ID" value="ENSP00000314638.3"/>
    <property type="gene ID" value="ENSG00000145730.21"/>
</dbReference>
<dbReference type="Ensembl" id="ENST00000438793.8">
    <molecule id="P19021-1"/>
    <property type="protein sequence ID" value="ENSP00000396493.3"/>
    <property type="gene ID" value="ENSG00000145730.21"/>
</dbReference>
<dbReference type="Ensembl" id="ENST00000455264.7">
    <molecule id="P19021-3"/>
    <property type="protein sequence ID" value="ENSP00000403461.2"/>
    <property type="gene ID" value="ENSG00000145730.21"/>
</dbReference>
<dbReference type="Ensembl" id="ENST00000682407.1">
    <molecule id="P19021-6"/>
    <property type="protein sequence ID" value="ENSP00000506966.1"/>
    <property type="gene ID" value="ENSG00000145730.21"/>
</dbReference>
<dbReference type="Ensembl" id="ENST00000684529.1">
    <molecule id="P19021-5"/>
    <property type="protein sequence ID" value="ENSP00000507038.1"/>
    <property type="gene ID" value="ENSG00000145730.21"/>
</dbReference>
<dbReference type="GeneID" id="5066"/>
<dbReference type="KEGG" id="hsa:5066"/>
<dbReference type="MANE-Select" id="ENST00000438793.8">
    <property type="protein sequence ID" value="ENSP00000396493.3"/>
    <property type="RefSeq nucleotide sequence ID" value="NM_001177306.2"/>
    <property type="RefSeq protein sequence ID" value="NP_001170777.1"/>
</dbReference>
<dbReference type="UCSC" id="uc003kns.4">
    <molecule id="P19021-1"/>
    <property type="organism name" value="human"/>
</dbReference>
<dbReference type="AGR" id="HGNC:8596"/>
<dbReference type="CTD" id="5066"/>
<dbReference type="DisGeNET" id="5066"/>
<dbReference type="GeneCards" id="PAM"/>
<dbReference type="HGNC" id="HGNC:8596">
    <property type="gene designation" value="PAM"/>
</dbReference>
<dbReference type="HPA" id="ENSG00000145730">
    <property type="expression patterns" value="Tissue enhanced (heart)"/>
</dbReference>
<dbReference type="MIM" id="170270">
    <property type="type" value="gene"/>
</dbReference>
<dbReference type="neXtProt" id="NX_P19021"/>
<dbReference type="OpenTargets" id="ENSG00000145730"/>
<dbReference type="PharmGKB" id="PA32926"/>
<dbReference type="VEuPathDB" id="HostDB:ENSG00000145730"/>
<dbReference type="eggNOG" id="KOG3567">
    <property type="taxonomic scope" value="Eukaryota"/>
</dbReference>
<dbReference type="GeneTree" id="ENSGT00940000156369"/>
<dbReference type="HOGENOM" id="CLU_012293_0_0_1"/>
<dbReference type="InParanoid" id="P19021"/>
<dbReference type="OMA" id="AGDEMCN"/>
<dbReference type="OrthoDB" id="10018185at2759"/>
<dbReference type="PAN-GO" id="P19021">
    <property type="GO annotations" value="2 GO annotations based on evolutionary models"/>
</dbReference>
<dbReference type="PhylomeDB" id="P19021"/>
<dbReference type="TreeFam" id="TF320698"/>
<dbReference type="BRENDA" id="1.14.17.3">
    <property type="organism ID" value="2681"/>
</dbReference>
<dbReference type="BRENDA" id="4.3.2.5">
    <property type="organism ID" value="2681"/>
</dbReference>
<dbReference type="PathwayCommons" id="P19021"/>
<dbReference type="SignaLink" id="P19021"/>
<dbReference type="SIGNOR" id="P19021"/>
<dbReference type="BioGRID-ORCS" id="5066">
    <property type="hits" value="14 hits in 1151 CRISPR screens"/>
</dbReference>
<dbReference type="ChiTaRS" id="PAM">
    <property type="organism name" value="human"/>
</dbReference>
<dbReference type="GeneWiki" id="Peptidylglycine_alpha-amidating_monooxygenase"/>
<dbReference type="GenomeRNAi" id="5066"/>
<dbReference type="Pharos" id="P19021">
    <property type="development level" value="Tchem"/>
</dbReference>
<dbReference type="PRO" id="PR:P19021"/>
<dbReference type="Proteomes" id="UP000005640">
    <property type="component" value="Chromosome 5"/>
</dbReference>
<dbReference type="RNAct" id="P19021">
    <property type="molecule type" value="protein"/>
</dbReference>
<dbReference type="Bgee" id="ENSG00000145730">
    <property type="expression patterns" value="Expressed in cardiac muscle of right atrium and 207 other cell types or tissues"/>
</dbReference>
<dbReference type="ExpressionAtlas" id="P19021">
    <property type="expression patterns" value="baseline and differential"/>
</dbReference>
<dbReference type="GO" id="GO:0070062">
    <property type="term" value="C:extracellular exosome"/>
    <property type="evidence" value="ECO:0007005"/>
    <property type="project" value="UniProtKB"/>
</dbReference>
<dbReference type="GO" id="GO:0005576">
    <property type="term" value="C:extracellular region"/>
    <property type="evidence" value="ECO:0000318"/>
    <property type="project" value="GO_Central"/>
</dbReference>
<dbReference type="GO" id="GO:0016020">
    <property type="term" value="C:membrane"/>
    <property type="evidence" value="ECO:0007005"/>
    <property type="project" value="UniProtKB"/>
</dbReference>
<dbReference type="GO" id="GO:0030667">
    <property type="term" value="C:secretory granule membrane"/>
    <property type="evidence" value="ECO:0000250"/>
    <property type="project" value="UniProtKB"/>
</dbReference>
<dbReference type="GO" id="GO:0030658">
    <property type="term" value="C:transport vesicle membrane"/>
    <property type="evidence" value="ECO:0007669"/>
    <property type="project" value="UniProtKB-SubCell"/>
</dbReference>
<dbReference type="GO" id="GO:0005509">
    <property type="term" value="F:calcium ion binding"/>
    <property type="evidence" value="ECO:0000250"/>
    <property type="project" value="UniProtKB"/>
</dbReference>
<dbReference type="GO" id="GO:0005507">
    <property type="term" value="F:copper ion binding"/>
    <property type="evidence" value="ECO:0000250"/>
    <property type="project" value="UniProtKB"/>
</dbReference>
<dbReference type="GO" id="GO:0031418">
    <property type="term" value="F:L-ascorbic acid binding"/>
    <property type="evidence" value="ECO:0007669"/>
    <property type="project" value="UniProtKB-KW"/>
</dbReference>
<dbReference type="GO" id="GO:0004598">
    <property type="term" value="F:peptidylamidoglycolate lyase activity"/>
    <property type="evidence" value="ECO:0000314"/>
    <property type="project" value="UniProtKB"/>
</dbReference>
<dbReference type="GO" id="GO:0004504">
    <property type="term" value="F:peptidylglycine monooxygenase activity"/>
    <property type="evidence" value="ECO:0000314"/>
    <property type="project" value="UniProtKB"/>
</dbReference>
<dbReference type="GO" id="GO:0008270">
    <property type="term" value="F:zinc ion binding"/>
    <property type="evidence" value="ECO:0000314"/>
    <property type="project" value="UniProtKB"/>
</dbReference>
<dbReference type="GO" id="GO:0062112">
    <property type="term" value="P:fatty acid primary amide biosynthetic process"/>
    <property type="evidence" value="ECO:0000250"/>
    <property type="project" value="UniProtKB"/>
</dbReference>
<dbReference type="GO" id="GO:0001519">
    <property type="term" value="P:peptide amidation"/>
    <property type="evidence" value="ECO:0000314"/>
    <property type="project" value="UniProtKB"/>
</dbReference>
<dbReference type="GO" id="GO:0010043">
    <property type="term" value="P:response to zinc ion"/>
    <property type="evidence" value="ECO:0000314"/>
    <property type="project" value="UniProtKB"/>
</dbReference>
<dbReference type="CDD" id="cd14958">
    <property type="entry name" value="NHL_PAL_like"/>
    <property type="match status" value="1"/>
</dbReference>
<dbReference type="FunFam" id="2.60.120.230:FF:000002">
    <property type="entry name" value="Peptidyl-glycine alpha-amidating monooxygenase B"/>
    <property type="match status" value="1"/>
</dbReference>
<dbReference type="FunFam" id="2.120.10.30:FF:000016">
    <property type="entry name" value="peptidyl-glycine alpha-amidating monooxygenase isoform X1"/>
    <property type="match status" value="1"/>
</dbReference>
<dbReference type="FunFam" id="2.60.120.310:FF:000001">
    <property type="entry name" value="peptidyl-glycine alpha-amidating monooxygenase isoform X1"/>
    <property type="match status" value="1"/>
</dbReference>
<dbReference type="Gene3D" id="2.60.120.230">
    <property type="match status" value="1"/>
</dbReference>
<dbReference type="Gene3D" id="2.60.120.310">
    <property type="entry name" value="Copper type II, ascorbate-dependent monooxygenase, N-terminal domain"/>
    <property type="match status" value="1"/>
</dbReference>
<dbReference type="Gene3D" id="2.120.10.30">
    <property type="entry name" value="TolB, C-terminal domain"/>
    <property type="match status" value="1"/>
</dbReference>
<dbReference type="InterPro" id="IPR011042">
    <property type="entry name" value="6-blade_b-propeller_TolB-like"/>
</dbReference>
<dbReference type="InterPro" id="IPR014784">
    <property type="entry name" value="Cu2_ascorb_mOase-like_C"/>
</dbReference>
<dbReference type="InterPro" id="IPR020611">
    <property type="entry name" value="Cu2_ascorb_mOase_CS-1"/>
</dbReference>
<dbReference type="InterPro" id="IPR014783">
    <property type="entry name" value="Cu2_ascorb_mOase_CS-2"/>
</dbReference>
<dbReference type="InterPro" id="IPR000323">
    <property type="entry name" value="Cu2_ascorb_mOase_N"/>
</dbReference>
<dbReference type="InterPro" id="IPR036939">
    <property type="entry name" value="Cu2_ascorb_mOase_N_sf"/>
</dbReference>
<dbReference type="InterPro" id="IPR024548">
    <property type="entry name" value="Cu2_monoox_C"/>
</dbReference>
<dbReference type="InterPro" id="IPR001258">
    <property type="entry name" value="NHL_repeat"/>
</dbReference>
<dbReference type="InterPro" id="IPR000720">
    <property type="entry name" value="PHM/PAL"/>
</dbReference>
<dbReference type="InterPro" id="IPR008977">
    <property type="entry name" value="PHM/PNGase_F_dom_sf"/>
</dbReference>
<dbReference type="PANTHER" id="PTHR10680">
    <property type="entry name" value="PEPTIDYL-GLYCINE ALPHA-AMIDATING MONOOXYGENASE"/>
    <property type="match status" value="1"/>
</dbReference>
<dbReference type="PANTHER" id="PTHR10680:SF14">
    <property type="entry name" value="PEPTIDYL-GLYCINE ALPHA-AMIDATING MONOOXYGENASE"/>
    <property type="match status" value="1"/>
</dbReference>
<dbReference type="Pfam" id="PF03712">
    <property type="entry name" value="Cu2_monoox_C"/>
    <property type="match status" value="1"/>
</dbReference>
<dbReference type="Pfam" id="PF01082">
    <property type="entry name" value="Cu2_monooxygen"/>
    <property type="match status" value="1"/>
</dbReference>
<dbReference type="Pfam" id="PF01436">
    <property type="entry name" value="NHL"/>
    <property type="match status" value="3"/>
</dbReference>
<dbReference type="PRINTS" id="PR00790">
    <property type="entry name" value="PAMONOXGNASE"/>
</dbReference>
<dbReference type="SUPFAM" id="SSF101898">
    <property type="entry name" value="NHL repeat"/>
    <property type="match status" value="1"/>
</dbReference>
<dbReference type="SUPFAM" id="SSF49742">
    <property type="entry name" value="PHM/PNGase F"/>
    <property type="match status" value="2"/>
</dbReference>
<dbReference type="PROSITE" id="PS00084">
    <property type="entry name" value="CU2_MONOOXYGENASE_1"/>
    <property type="match status" value="1"/>
</dbReference>
<dbReference type="PROSITE" id="PS00085">
    <property type="entry name" value="CU2_MONOOXYGENASE_2"/>
    <property type="match status" value="1"/>
</dbReference>
<dbReference type="PROSITE" id="PS51125">
    <property type="entry name" value="NHL"/>
    <property type="match status" value="5"/>
</dbReference>
<name>AMD_HUMAN</name>
<gene>
    <name evidence="9 19" type="primary">PAM</name>
</gene>
<evidence type="ECO:0000250" key="1">
    <source>
        <dbReference type="UniProtKB" id="P10731"/>
    </source>
</evidence>
<evidence type="ECO:0000250" key="2">
    <source>
        <dbReference type="UniProtKB" id="P14925"/>
    </source>
</evidence>
<evidence type="ECO:0000255" key="3"/>
<evidence type="ECO:0000256" key="4">
    <source>
        <dbReference type="SAM" id="MobiDB-lite"/>
    </source>
</evidence>
<evidence type="ECO:0000269" key="5">
    <source>
    </source>
</evidence>
<evidence type="ECO:0000269" key="6">
    <source>
    </source>
</evidence>
<evidence type="ECO:0000269" key="7">
    <source>
    </source>
</evidence>
<evidence type="ECO:0000269" key="8">
    <source>
    </source>
</evidence>
<evidence type="ECO:0000303" key="9">
    <source>
    </source>
</evidence>
<evidence type="ECO:0000303" key="10">
    <source>
    </source>
</evidence>
<evidence type="ECO:0000303" key="11">
    <source>
    </source>
</evidence>
<evidence type="ECO:0000303" key="12">
    <source>
    </source>
</evidence>
<evidence type="ECO:0000303" key="13">
    <source>
    </source>
</evidence>
<evidence type="ECO:0000303" key="14">
    <source>
    </source>
</evidence>
<evidence type="ECO:0000303" key="15">
    <source>
    </source>
</evidence>
<evidence type="ECO:0000303" key="16">
    <source ref="5"/>
</evidence>
<evidence type="ECO:0000303" key="17">
    <source ref="9"/>
</evidence>
<evidence type="ECO:0000305" key="18"/>
<evidence type="ECO:0000312" key="19">
    <source>
        <dbReference type="HGNC" id="HGNC:8596"/>
    </source>
</evidence>
<evidence type="ECO:0007744" key="20">
    <source>
    </source>
</evidence>
<evidence type="ECO:0007744" key="21">
    <source>
    </source>
</evidence>
<evidence type="ECO:0007744" key="22">
    <source>
    </source>
</evidence>
<evidence type="ECO:0007744" key="23">
    <source>
    </source>
</evidence>
<feature type="signal peptide" evidence="18">
    <location>
        <begin position="1"/>
        <end position="20"/>
    </location>
</feature>
<feature type="propeptide" id="PRO_0000006361" evidence="18">
    <location>
        <begin position="21"/>
        <end position="30"/>
    </location>
</feature>
<feature type="chain" id="PRO_0000006362" description="Peptidyl-glycine alpha-amidating monooxygenase">
    <location>
        <begin position="31"/>
        <end position="973"/>
    </location>
</feature>
<feature type="topological domain" description="Intragranular" evidence="3">
    <location>
        <begin position="31"/>
        <end position="863"/>
    </location>
</feature>
<feature type="transmembrane region" description="Helical" evidence="3">
    <location>
        <begin position="864"/>
        <end position="887"/>
    </location>
</feature>
<feature type="topological domain" description="Cytoplasmic" evidence="3">
    <location>
        <begin position="888"/>
        <end position="973"/>
    </location>
</feature>
<feature type="repeat" description="NHL 1">
    <location>
        <begin position="498"/>
        <end position="541"/>
    </location>
</feature>
<feature type="repeat" description="NHL 2">
    <location>
        <begin position="567"/>
        <end position="608"/>
    </location>
</feature>
<feature type="repeat" description="NHL 3">
    <location>
        <begin position="617"/>
        <end position="662"/>
    </location>
</feature>
<feature type="repeat" description="NHL 4">
    <location>
        <begin position="670"/>
        <end position="714"/>
    </location>
</feature>
<feature type="repeat" description="NHL 5">
    <location>
        <begin position="766"/>
        <end position="809"/>
    </location>
</feature>
<feature type="region of interest" description="Peptidylglycine alpha-hydroxylating monooxygenase" evidence="2">
    <location>
        <begin position="1"/>
        <end position="494"/>
    </location>
</feature>
<feature type="region of interest" description="Peptidyl-alpha-hydroxyglycine alpha-amidating lyase" evidence="2">
    <location>
        <begin position="495"/>
        <end position="817"/>
    </location>
</feature>
<feature type="region of interest" description="Interaction with RASSF9" evidence="2">
    <location>
        <begin position="925"/>
        <end position="942"/>
    </location>
</feature>
<feature type="region of interest" description="Disordered" evidence="4">
    <location>
        <begin position="937"/>
        <end position="973"/>
    </location>
</feature>
<feature type="compositionally biased region" description="Acidic residues" evidence="4">
    <location>
        <begin position="949"/>
        <end position="961"/>
    </location>
</feature>
<feature type="compositionally biased region" description="Low complexity" evidence="4">
    <location>
        <begin position="962"/>
        <end position="973"/>
    </location>
</feature>
<feature type="binding site" evidence="2">
    <location>
        <position position="102"/>
    </location>
    <ligand>
        <name>Cu(2+)</name>
        <dbReference type="ChEBI" id="CHEBI:29036"/>
        <label>1</label>
        <note>catalytic</note>
    </ligand>
</feature>
<feature type="binding site" evidence="2">
    <location>
        <position position="103"/>
    </location>
    <ligand>
        <name>Cu(2+)</name>
        <dbReference type="ChEBI" id="CHEBI:29036"/>
        <label>1</label>
        <note>catalytic</note>
    </ligand>
</feature>
<feature type="binding site" evidence="2">
    <location>
        <position position="167"/>
    </location>
    <ligand>
        <name>Cu(2+)</name>
        <dbReference type="ChEBI" id="CHEBI:29036"/>
        <label>1</label>
        <note>catalytic</note>
    </ligand>
</feature>
<feature type="binding site" evidence="2">
    <location>
        <position position="237"/>
    </location>
    <ligand>
        <name>Cu(2+)</name>
        <dbReference type="ChEBI" id="CHEBI:29036"/>
        <label>2</label>
        <note>catalytic</note>
    </ligand>
</feature>
<feature type="binding site" evidence="2">
    <location>
        <position position="239"/>
    </location>
    <ligand>
        <name>Cu(2+)</name>
        <dbReference type="ChEBI" id="CHEBI:29036"/>
        <label>2</label>
        <note>catalytic</note>
    </ligand>
</feature>
<feature type="binding site" evidence="2">
    <location>
        <position position="309"/>
    </location>
    <ligand>
        <name>Cu(2+)</name>
        <dbReference type="ChEBI" id="CHEBI:29036"/>
        <label>2</label>
        <note>catalytic</note>
    </ligand>
</feature>
<feature type="binding site" evidence="2">
    <location>
        <position position="517"/>
    </location>
    <ligand>
        <name>Ca(2+)</name>
        <dbReference type="ChEBI" id="CHEBI:29108"/>
        <note>structural</note>
    </ligand>
</feature>
<feature type="binding site" evidence="2">
    <location>
        <position position="530"/>
    </location>
    <ligand>
        <name>a protein</name>
        <dbReference type="ChEBI" id="CHEBI:16541"/>
    </ligand>
    <ligandPart>
        <name>C-terminal Xaa-(2S)-2-hydroxyglycine residue</name>
        <dbReference type="ChEBI" id="CHEBI:142768"/>
    </ligandPart>
</feature>
<feature type="binding site" evidence="2">
    <location>
        <position position="582"/>
    </location>
    <ligand>
        <name>Zn(2+)</name>
        <dbReference type="ChEBI" id="CHEBI:29105"/>
        <note>catalytic</note>
    </ligand>
</feature>
<feature type="binding site" evidence="2">
    <location>
        <position position="584"/>
    </location>
    <ligand>
        <name>Ca(2+)</name>
        <dbReference type="ChEBI" id="CHEBI:29108"/>
        <note>structural</note>
    </ligand>
</feature>
<feature type="binding site" evidence="2">
    <location>
        <position position="651"/>
    </location>
    <ligand>
        <name>a protein</name>
        <dbReference type="ChEBI" id="CHEBI:16541"/>
    </ligand>
    <ligandPart>
        <name>C-terminal Xaa-(2S)-2-hydroxyglycine residue</name>
        <dbReference type="ChEBI" id="CHEBI:142768"/>
    </ligandPart>
</feature>
<feature type="binding site" evidence="2">
    <location>
        <position position="687"/>
    </location>
    <ligand>
        <name>Zn(2+)</name>
        <dbReference type="ChEBI" id="CHEBI:29105"/>
        <note>catalytic</note>
    </ligand>
</feature>
<feature type="binding site" evidence="2">
    <location>
        <position position="703"/>
    </location>
    <ligand>
        <name>a protein</name>
        <dbReference type="ChEBI" id="CHEBI:16541"/>
    </ligand>
    <ligandPart>
        <name>C-terminal Xaa-(2S)-2-hydroxyglycine residue</name>
        <dbReference type="ChEBI" id="CHEBI:142768"/>
    </ligandPart>
</feature>
<feature type="binding site" evidence="2">
    <location>
        <position position="783"/>
    </location>
    <ligand>
        <name>Zn(2+)</name>
        <dbReference type="ChEBI" id="CHEBI:29105"/>
        <note>catalytic</note>
    </ligand>
</feature>
<feature type="binding site" evidence="2">
    <location>
        <position position="784"/>
    </location>
    <ligand>
        <name>Ca(2+)</name>
        <dbReference type="ChEBI" id="CHEBI:29108"/>
        <note>structural</note>
    </ligand>
</feature>
<feature type="modified residue" description="Phosphoserine" evidence="23">
    <location>
        <position position="918"/>
    </location>
</feature>
<feature type="modified residue" description="Phosphoserine" evidence="21 23">
    <location>
        <position position="929"/>
    </location>
</feature>
<feature type="modified residue" description="Phosphoserine" evidence="22">
    <location>
        <position position="942"/>
    </location>
</feature>
<feature type="modified residue" description="Phosphothreonine" evidence="5">
    <location>
        <position position="943"/>
    </location>
</feature>
<feature type="modified residue" description="Phosphoserine; by UHMK1; in vitro" evidence="5 20 22">
    <location>
        <position position="946"/>
    </location>
</feature>
<feature type="modified residue" description="Phosphoserine" evidence="2">
    <location>
        <position position="957"/>
    </location>
</feature>
<feature type="glycosylation site" description="N-linked (GlcNAc...) asparagine" evidence="3">
    <location>
        <position position="762"/>
    </location>
</feature>
<feature type="disulfide bond" evidence="2">
    <location>
        <begin position="42"/>
        <end position="181"/>
    </location>
</feature>
<feature type="disulfide bond" evidence="2">
    <location>
        <begin position="76"/>
        <end position="121"/>
    </location>
</feature>
<feature type="disulfide bond" evidence="2">
    <location>
        <begin position="109"/>
        <end position="126"/>
    </location>
</feature>
<feature type="disulfide bond" evidence="2">
    <location>
        <begin position="222"/>
        <end position="329"/>
    </location>
</feature>
<feature type="disulfide bond" evidence="2">
    <location>
        <begin position="288"/>
        <end position="310"/>
    </location>
</feature>
<feature type="disulfide bond" evidence="2">
    <location>
        <begin position="631"/>
        <end position="652"/>
    </location>
</feature>
<feature type="disulfide bond" evidence="2">
    <location>
        <begin position="699"/>
        <end position="710"/>
    </location>
</feature>
<feature type="splice variant" id="VSP_001227" description="In isoform 2." evidence="10 16">
    <location>
        <begin position="388"/>
        <end position="494"/>
    </location>
</feature>
<feature type="splice variant" id="VSP_001229" description="In isoform 4." evidence="17">
    <location>
        <begin position="829"/>
        <end position="914"/>
    </location>
</feature>
<feature type="splice variant" id="VSP_001228" description="In isoform 3." evidence="14">
    <location>
        <begin position="829"/>
        <end position="896"/>
    </location>
</feature>
<feature type="splice variant" id="VSP_038691" description="In isoform 5." evidence="13">
    <original>G</original>
    <variation>GA</variation>
    <location>
        <position position="896"/>
    </location>
</feature>
<feature type="splice variant" id="VSP_042209" description="In isoform 6." evidence="15">
    <location>
        <begin position="897"/>
        <end position="914"/>
    </location>
</feature>
<feature type="sequence variant" id="VAR_055694" description="In dbSNP:rs2230458.">
    <original>V</original>
    <variation>L</variation>
    <location>
        <position position="49"/>
    </location>
</feature>
<feature type="sequence conflict" description="In Ref. 4; BAF82847." evidence="18" ref="4">
    <original>S</original>
    <variation>P</variation>
    <location>
        <position position="26"/>
    </location>
</feature>
<feature type="sequence conflict" description="In Ref. 1; AAA36414." evidence="18" ref="1">
    <original>G</original>
    <variation>E</variation>
    <location>
        <position position="574"/>
    </location>
</feature>
<feature type="sequence conflict" description="In Ref. 4; BAF82847." evidence="18" ref="4">
    <original>P</original>
    <variation>L</variation>
    <location>
        <position position="774"/>
    </location>
</feature>
<feature type="sequence conflict" description="In Ref. 2; AAB32775." evidence="18" ref="2">
    <location>
        <begin position="830"/>
        <end position="831"/>
    </location>
</feature>
<feature type="modified residue" description="Sulfotyrosine" evidence="8">
    <location sequence="P19021-3">
        <position position="893"/>
    </location>
</feature>
<feature type="modified residue" description="Sulfotyrosine" evidence="8">
    <location sequence="P19021-4">
        <position position="875"/>
    </location>
</feature>
<protein>
    <recommendedName>
        <fullName evidence="9">Peptidyl-glycine alpha-amidating monooxygenase</fullName>
        <shortName evidence="9">PAM</shortName>
    </recommendedName>
    <domain>
        <recommendedName>
            <fullName evidence="9">Peptidylglycine alpha-hydroxylating monooxygenase</fullName>
            <shortName evidence="9">PHM</shortName>
            <ecNumber evidence="6">1.14.17.3</ecNumber>
        </recommendedName>
    </domain>
    <domain>
        <recommendedName>
            <fullName>Peptidyl-alpha-hydroxyglycine alpha-amidating lyase</fullName>
            <ecNumber evidence="6">4.3.2.5</ecNumber>
        </recommendedName>
        <alternativeName>
            <fullName evidence="9">Peptidylamidoglycolate lyase</fullName>
            <shortName evidence="9">PAL</shortName>
        </alternativeName>
    </domain>
</protein>
<organism>
    <name type="scientific">Homo sapiens</name>
    <name type="common">Human</name>
    <dbReference type="NCBI Taxonomy" id="9606"/>
    <lineage>
        <taxon>Eukaryota</taxon>
        <taxon>Metazoa</taxon>
        <taxon>Chordata</taxon>
        <taxon>Craniata</taxon>
        <taxon>Vertebrata</taxon>
        <taxon>Euteleostomi</taxon>
        <taxon>Mammalia</taxon>
        <taxon>Eutheria</taxon>
        <taxon>Euarchontoglires</taxon>
        <taxon>Primates</taxon>
        <taxon>Haplorrhini</taxon>
        <taxon>Catarrhini</taxon>
        <taxon>Hominidae</taxon>
        <taxon>Homo</taxon>
    </lineage>
</organism>
<proteinExistence type="evidence at protein level"/>
<keyword id="KW-0025">Alternative splicing</keyword>
<keyword id="KW-0106">Calcium</keyword>
<keyword id="KW-0165">Cleavage on pair of basic residues</keyword>
<keyword id="KW-0186">Copper</keyword>
<keyword id="KW-0968">Cytoplasmic vesicle</keyword>
<keyword id="KW-1015">Disulfide bond</keyword>
<keyword id="KW-0325">Glycoprotein</keyword>
<keyword id="KW-0443">Lipid metabolism</keyword>
<keyword id="KW-0456">Lyase</keyword>
<keyword id="KW-0472">Membrane</keyword>
<keyword id="KW-0479">Metal-binding</keyword>
<keyword id="KW-0503">Monooxygenase</keyword>
<keyword id="KW-0511">Multifunctional enzyme</keyword>
<keyword id="KW-0560">Oxidoreductase</keyword>
<keyword id="KW-0597">Phosphoprotein</keyword>
<keyword id="KW-1267">Proteomics identification</keyword>
<keyword id="KW-1185">Reference proteome</keyword>
<keyword id="KW-0677">Repeat</keyword>
<keyword id="KW-0964">Secreted</keyword>
<keyword id="KW-0732">Signal</keyword>
<keyword id="KW-0765">Sulfation</keyword>
<keyword id="KW-0812">Transmembrane</keyword>
<keyword id="KW-1133">Transmembrane helix</keyword>
<keyword id="KW-0847">Vitamin C</keyword>
<keyword id="KW-0862">Zinc</keyword>
<sequence>MAGRVPSLLVLLVFPSSCLAFRSPLSVFKRFKETTRPFSNECLGTTRPVVPIDSSDFALDIRMPGVTPKQSDTYFCMSMRIPVDEEAFVIDFKPRASMDTVHHMLLFGCNMPSSTGSYWFCDEGTCTDKANILYAWARNAPPTRLPKGVGFRVGGETGSKYFVLQVHYGDISAFRDNNKDCSGVSLHLTRLPQPLIAGMYLMMSVDTVIPAGEKVVNSDISCHYKNYPMHVFAYRVHTHHLGKVVSGYRVRNGQWTLIGRQSPQLPQAFYPVGHPVDVSFGDLLAARCVFTGEGRTEATHIGGTSSDEMCNLYIMYYMEAKHAVSFMTCTQNVAPDMFRTIPPEANIPIPVKSDMVMMHEHHKETEYKDKIPLLQQPKREEEEVLDQGDFYSLLSKLLGEREDVVHVHKYNPTEKAESESDLVAEIANVVQKKDLGRSDAREGAEHERGNAILVRDRIHKFHRLVSTLRPPESRVFSLQQPPPGEGTWEPEHTGDFHMEEALDWPGVYLLPGQVSGVALDPKNNLVIFHRGDHVWDGNSFDSKFVYQQIGLGPIEEDTILVIDPNNAAVLQSSGKNLFYLPHGLSIDKDGNYWVTDVALHQVFKLDPNNKEGPVLILGRSMQPGSDQNHFCQPTDVAVDPGTGAIYVSDGYCNSRIVQFSPSGKFITQWGEESSGSSPLPGQFTVPHSLALVPLLGQLCVADRENGRIQCFKTDTKEFVREIKHSSFGRNVFAISYIPGLLFAVNGKPHFGDQEPVQGFVMNFSNGEIIDIFKPVRKHFDMPHDIVASEDGTVYIGDAHTNTVWKFTLTEKLEHRSVKKAGIEVQEIKEAEAVVETKMENKPTSSELQKMQEKQKLIKEPGSGVPVVLITTLLVIPVVVLLAIAIFIRWKKSRAFGDSEHKLETSSGRVLGRFRGKGSGGLNLGNFFASRKGYSRKGFDRLSTEGSDQEKEDDGSESEEEYSAPLPALAPSSS</sequence>
<comment type="function">
    <text evidence="2 6 7 11 12">Bifunctional enzyme that catalyzes amidation of the C-terminus of proteins (PubMed:12699694, PubMed:2357221). Alpha-amidation is present at the C-terminus of many endocrine hormones and neuropeptides and is required for their activity (PubMed:1575450). C-terminal amidation also takes place in response to protein fragmentation triggered by oxidative stress, promoting degradation of amidated protein fragments by the proteasome (PubMed:2207077). Alpha-amidation involves two sequential reactions, both of which are catalyzed by separate catalytic domains of the enzyme (PubMed:12699694). The first step, catalyzed by peptidyl alpha-hydroxylating monooxygenase (PHM) domain, is the copper-, ascorbate-, and O2- dependent stereospecific hydroxylation (with S stereochemistry) at the alpha-carbon (C-alpha) of the C-terminal glycine of the peptidylglycine substrate (PubMed:12699694). The second step, catalyzed by the peptidylglycine amidoglycolate lyase (PAL) domain, is the zinc-dependent cleavage of the N-C-alpha bond, producing the alpha-amidated peptide and glyoxylate (PubMed:12699694). Similarly, catalyzes the two-step conversion of an N-fatty acylglycine to a primary fatty acid amide and glyoxylate (By similarity).</text>
</comment>
<comment type="catalytic activity">
    <reaction evidence="6">
        <text>a [peptide]-C-terminal glycine + 2 L-ascorbate + O2 = a [peptide]-C-terminal (2S)-2-hydroxyglycine + 2 monodehydro-L-ascorbate radical + H2O</text>
        <dbReference type="Rhea" id="RHEA:21452"/>
        <dbReference type="Rhea" id="RHEA-COMP:13486"/>
        <dbReference type="Rhea" id="RHEA-COMP:15321"/>
        <dbReference type="ChEBI" id="CHEBI:15377"/>
        <dbReference type="ChEBI" id="CHEBI:15379"/>
        <dbReference type="ChEBI" id="CHEBI:38290"/>
        <dbReference type="ChEBI" id="CHEBI:59513"/>
        <dbReference type="ChEBI" id="CHEBI:137000"/>
        <dbReference type="ChEBI" id="CHEBI:142768"/>
        <dbReference type="EC" id="1.14.17.3"/>
    </reaction>
</comment>
<comment type="catalytic activity">
    <reaction evidence="6">
        <text>a [peptide]-C-terminal (2S)-2-hydroxyglycine = a [peptide]-C-terminal amide + glyoxylate</text>
        <dbReference type="Rhea" id="RHEA:20924"/>
        <dbReference type="Rhea" id="RHEA-COMP:13485"/>
        <dbReference type="Rhea" id="RHEA-COMP:15321"/>
        <dbReference type="ChEBI" id="CHEBI:36655"/>
        <dbReference type="ChEBI" id="CHEBI:137001"/>
        <dbReference type="ChEBI" id="CHEBI:142768"/>
        <dbReference type="EC" id="4.3.2.5"/>
    </reaction>
</comment>
<comment type="catalytic activity">
    <reaction evidence="2">
        <text>N-dodecanoylglycine + 2 L-ascorbate + O2 = N-dodecanoyl-(2S)-hydroxyglycine + 2 monodehydro-L-ascorbate radical + H2O</text>
        <dbReference type="Rhea" id="RHEA:58540"/>
        <dbReference type="ChEBI" id="CHEBI:15377"/>
        <dbReference type="ChEBI" id="CHEBI:15379"/>
        <dbReference type="ChEBI" id="CHEBI:38290"/>
        <dbReference type="ChEBI" id="CHEBI:59513"/>
        <dbReference type="ChEBI" id="CHEBI:142678"/>
        <dbReference type="ChEBI" id="CHEBI:142693"/>
    </reaction>
</comment>
<comment type="catalytic activity">
    <reaction evidence="2">
        <text>N-dodecanoyl-(2S)-hydroxyglycine = dodecanamide + glyoxylate</text>
        <dbReference type="Rhea" id="RHEA:58624"/>
        <dbReference type="ChEBI" id="CHEBI:34726"/>
        <dbReference type="ChEBI" id="CHEBI:36655"/>
        <dbReference type="ChEBI" id="CHEBI:142693"/>
    </reaction>
</comment>
<comment type="catalytic activity">
    <reaction evidence="2">
        <text>N-(9Z,12Z,15Z)-octadecatrienoylglycine + 2 L-ascorbate + O2 = N-(9Z,12Z,15Z)-octadecatrienoyl-(2S)-hydroxyglycine + 2 monodehydro-L-ascorbate radical + H2O</text>
        <dbReference type="Rhea" id="RHEA:58548"/>
        <dbReference type="ChEBI" id="CHEBI:15377"/>
        <dbReference type="ChEBI" id="CHEBI:15379"/>
        <dbReference type="ChEBI" id="CHEBI:38290"/>
        <dbReference type="ChEBI" id="CHEBI:59513"/>
        <dbReference type="ChEBI" id="CHEBI:142679"/>
        <dbReference type="ChEBI" id="CHEBI:142697"/>
    </reaction>
</comment>
<comment type="catalytic activity">
    <reaction evidence="2">
        <text>N-(9Z,12Z,15Z)-octadecatrienoyl-(2S)-hydroxyglycine = (9Z,12Z,15Z)-octadecatrienamide + glyoxylate</text>
        <dbReference type="Rhea" id="RHEA:58644"/>
        <dbReference type="ChEBI" id="CHEBI:36655"/>
        <dbReference type="ChEBI" id="CHEBI:142684"/>
        <dbReference type="ChEBI" id="CHEBI:142697"/>
    </reaction>
</comment>
<comment type="catalytic activity">
    <reaction evidence="2">
        <text>N-(9Z-octadecenoyl)glycine + 2 L-ascorbate + O2 = N-(9Z-octadecenoyl)-(2S)-hydroxyglycine + 2 monodehydro-L-ascorbate radical + H2O</text>
        <dbReference type="Rhea" id="RHEA:58600"/>
        <dbReference type="ChEBI" id="CHEBI:15377"/>
        <dbReference type="ChEBI" id="CHEBI:15379"/>
        <dbReference type="ChEBI" id="CHEBI:38290"/>
        <dbReference type="ChEBI" id="CHEBI:59513"/>
        <dbReference type="ChEBI" id="CHEBI:133992"/>
        <dbReference type="ChEBI" id="CHEBI:142696"/>
    </reaction>
</comment>
<comment type="catalytic activity">
    <reaction evidence="2">
        <text>N-(9Z-octadecenoyl)-(2S)-hydroxyglycine = (9Z)-octadecenamide + glyoxylate</text>
        <dbReference type="Rhea" id="RHEA:58636"/>
        <dbReference type="ChEBI" id="CHEBI:36655"/>
        <dbReference type="ChEBI" id="CHEBI:116314"/>
        <dbReference type="ChEBI" id="CHEBI:142696"/>
    </reaction>
</comment>
<comment type="catalytic activity">
    <reaction evidence="2">
        <text>N-tetradecanoylglycine + 2 L-ascorbate + O2 = N-tetradecanoyl-(2S)-hydroxyglycine + 2 monodehydro-L-ascorbate radical + H2O</text>
        <dbReference type="Rhea" id="RHEA:58544"/>
        <dbReference type="ChEBI" id="CHEBI:15377"/>
        <dbReference type="ChEBI" id="CHEBI:15379"/>
        <dbReference type="ChEBI" id="CHEBI:38290"/>
        <dbReference type="ChEBI" id="CHEBI:59513"/>
        <dbReference type="ChEBI" id="CHEBI:86500"/>
        <dbReference type="ChEBI" id="CHEBI:142694"/>
    </reaction>
</comment>
<comment type="catalytic activity">
    <reaction evidence="2">
        <text>N-tetradecanoyl-(2S)-hydroxyglycine = tetradecamide + glyoxylate</text>
        <dbReference type="Rhea" id="RHEA:58632"/>
        <dbReference type="ChEBI" id="CHEBI:36655"/>
        <dbReference type="ChEBI" id="CHEBI:137125"/>
        <dbReference type="ChEBI" id="CHEBI:142694"/>
    </reaction>
</comment>
<comment type="catalytic activity">
    <reaction evidence="2">
        <text>N-decanoylglycine + 2 L-ascorbate + O2 = N-decanoyl-(2S)-hydroxyglycine + 2 monodehydro-L-ascorbate radical + H2O</text>
        <dbReference type="Rhea" id="RHEA:58608"/>
        <dbReference type="ChEBI" id="CHEBI:15377"/>
        <dbReference type="ChEBI" id="CHEBI:15379"/>
        <dbReference type="ChEBI" id="CHEBI:38290"/>
        <dbReference type="ChEBI" id="CHEBI:59513"/>
        <dbReference type="ChEBI" id="CHEBI:142680"/>
        <dbReference type="ChEBI" id="CHEBI:142692"/>
    </reaction>
</comment>
<comment type="catalytic activity">
    <reaction evidence="2">
        <text>N-decanoyl-(2S)-hydroxyglycine = decanamide + glyoxylate</text>
        <dbReference type="Rhea" id="RHEA:58620"/>
        <dbReference type="ChEBI" id="CHEBI:36655"/>
        <dbReference type="ChEBI" id="CHEBI:38833"/>
        <dbReference type="ChEBI" id="CHEBI:142692"/>
    </reaction>
</comment>
<comment type="catalytic activity">
    <reaction evidence="2">
        <text>N-octanoylglycine + 2 L-ascorbate + O2 = N-octanoyl-(2S)-hydroxyglycine + 2 monodehydro-L-ascorbate radical + H2O</text>
        <dbReference type="Rhea" id="RHEA:58612"/>
        <dbReference type="ChEBI" id="CHEBI:15377"/>
        <dbReference type="ChEBI" id="CHEBI:15379"/>
        <dbReference type="ChEBI" id="CHEBI:38290"/>
        <dbReference type="ChEBI" id="CHEBI:59513"/>
        <dbReference type="ChEBI" id="CHEBI:142681"/>
        <dbReference type="ChEBI" id="CHEBI:142691"/>
    </reaction>
</comment>
<comment type="catalytic activity">
    <reaction evidence="2">
        <text>N-octanoyl-(2S)-hydroxyglycine = octanamide + glyoxylate</text>
        <dbReference type="Rhea" id="RHEA:58616"/>
        <dbReference type="ChEBI" id="CHEBI:36655"/>
        <dbReference type="ChEBI" id="CHEBI:142682"/>
        <dbReference type="ChEBI" id="CHEBI:142691"/>
    </reaction>
</comment>
<comment type="cofactor">
    <cofactor evidence="6">
        <name>Zn(2+)</name>
        <dbReference type="ChEBI" id="CHEBI:29105"/>
    </cofactor>
    <text evidence="2">Binds one Zn(2+) ion per subunit.</text>
</comment>
<comment type="cofactor">
    <cofactor evidence="6">
        <name>Cu(2+)</name>
        <dbReference type="ChEBI" id="CHEBI:29036"/>
    </cofactor>
    <text evidence="2">Binds 2 Cu(2+) ions per subunit.</text>
</comment>
<comment type="activity regulation">
    <text evidence="2 6">PAM activity is inhibited by EDTA, phenylglyoxal and diethyl pyrocarbonate (PubMed:12699694). PAL activity is stimulated by cadmium and inhibited by mercury (By similarity).</text>
</comment>
<comment type="subunit">
    <text evidence="2">Monomer. Interacts with RASSF9.</text>
</comment>
<comment type="subcellular location">
    <subcellularLocation>
        <location evidence="1">Cytoplasmic vesicle</location>
        <location evidence="1">Secretory vesicle membrane</location>
        <topology evidence="1">Single-pass membrane protein</topology>
    </subcellularLocation>
    <text evidence="1">Secretory granules.</text>
</comment>
<comment type="subcellular location">
    <molecule>Isoform 1</molecule>
    <subcellularLocation>
        <location>Membrane</location>
        <topology>Single-pass type I membrane protein</topology>
    </subcellularLocation>
</comment>
<comment type="subcellular location">
    <molecule>Isoform 2</molecule>
    <subcellularLocation>
        <location>Membrane</location>
        <topology>Single-pass type I membrane protein</topology>
    </subcellularLocation>
</comment>
<comment type="subcellular location">
    <molecule>Isoform 3</molecule>
    <subcellularLocation>
        <location>Secreted</location>
    </subcellularLocation>
    <text>Secreted from secretory granules.</text>
</comment>
<comment type="subcellular location">
    <molecule>Isoform 4</molecule>
    <subcellularLocation>
        <location>Secreted</location>
    </subcellularLocation>
    <text>Secreted from secretory granules.</text>
</comment>
<comment type="alternative products">
    <event type="alternative splicing"/>
    <isoform>
        <id>P19021-1</id>
        <name>1</name>
        <sequence type="displayed"/>
    </isoform>
    <isoform>
        <id>P19021-2</id>
        <name>2</name>
        <sequence type="described" ref="VSP_001227"/>
    </isoform>
    <isoform>
        <id>P19021-3</id>
        <name>3</name>
        <sequence type="described" ref="VSP_001228"/>
    </isoform>
    <isoform>
        <id>P19021-4</id>
        <name>4</name>
        <sequence type="described" ref="VSP_001229"/>
    </isoform>
    <isoform>
        <id>P19021-5</id>
        <name>5</name>
        <sequence type="described" ref="VSP_038691"/>
    </isoform>
    <isoform>
        <id>P19021-6</id>
        <name>6</name>
        <sequence type="described" ref="VSP_042209"/>
    </isoform>
    <text>Additional isoforms seem to exist.</text>
</comment>
<comment type="miscellaneous">
    <molecule>Isoform 3</molecule>
    <text evidence="18">Soluble.</text>
</comment>
<comment type="miscellaneous">
    <molecule>Isoform 4</molecule>
    <text evidence="18">Soluble.</text>
</comment>
<comment type="similarity">
    <text evidence="18">In the C-terminal section; belongs to the peptidyl-alpha-hydroxyglycine alpha-amidating lyase family.</text>
</comment>
<comment type="similarity">
    <text evidence="18">In the N-terminal section; belongs to the copper type II ascorbate-dependent monooxygenase family.</text>
</comment>
<comment type="sequence caution" evidence="18">
    <conflict type="erroneous initiation">
        <sequence resource="EMBL-CDS" id="AAD01439"/>
    </conflict>
    <text>Truncated N-terminus.</text>
</comment>
<accession>P19021</accession>
<accession>A6NMR0</accession>
<accession>A8K293</accession>
<accession>O43211</accession>
<accession>O95080</accession>
<accession>Q16252</accession>
<accession>Q16253</accession>
<accession>Q54A45</accession>
<accession>Q86U53</accession>
<accession>Q8WVC7</accession>
<accession>Q9UCG0</accession>
<reference key="1">
    <citation type="journal article" date="1990" name="Biochem. Biophys. Res. Commun.">
        <title>Human peptidylglycine alpha-amidating monooxygenase: cDNA, cloning and functional expression of a truncated form in COS cells.</title>
        <authorList>
            <person name="Glauder J."/>
            <person name="Ragg H."/>
            <person name="Rauch J."/>
            <person name="Engels J.W."/>
        </authorList>
    </citation>
    <scope>NUCLEOTIDE SEQUENCE [MRNA] (ISOFORM 5)</scope>
    <scope>FUNCTION</scope>
    <source>
        <tissue>Thyroid carcinoma</tissue>
    </source>
</reference>
<reference key="2">
    <citation type="journal article" date="1994" name="Biochem. Biophys. Res. Commun.">
        <title>Isolation and functional expression of human pancreatic peptidylglycine alpha-amidating monooxygenase.</title>
        <authorList>
            <person name="Tateishi K."/>
            <person name="Arakawa F."/>
            <person name="Misumi Y."/>
            <person name="Treston A.M."/>
            <person name="Vos M."/>
            <person name="Matsuoka Y."/>
        </authorList>
    </citation>
    <scope>NUCLEOTIDE SEQUENCE [MRNA] (ISOFORMS 1 AND 3)</scope>
</reference>
<reference key="3">
    <citation type="journal article" date="2003" name="Protein Expr. Purif.">
        <title>Expression and characterization of human bifunctional peptidylglycine alpha-amidating monooxygenase.</title>
        <authorList>
            <person name="Satani M."/>
            <person name="Takahashi K."/>
            <person name="Sakamoto H."/>
            <person name="Harada S."/>
            <person name="Kaida Y."/>
            <person name="Noguchi M."/>
        </authorList>
    </citation>
    <scope>NUCLEOTIDE SEQUENCE [MRNA] (ISOFORM 1)</scope>
    <scope>COFACTOR</scope>
    <scope>ACTIVITY REGULATION</scope>
    <scope>FUNCTION</scope>
    <scope>CATALYTIC ACTIVITY</scope>
    <source>
        <tissue>Heart</tissue>
    </source>
</reference>
<reference key="4">
    <citation type="journal article" date="2004" name="Nat. Genet.">
        <title>Complete sequencing and characterization of 21,243 full-length human cDNAs.</title>
        <authorList>
            <person name="Ota T."/>
            <person name="Suzuki Y."/>
            <person name="Nishikawa T."/>
            <person name="Otsuki T."/>
            <person name="Sugiyama T."/>
            <person name="Irie R."/>
            <person name="Wakamatsu A."/>
            <person name="Hayashi K."/>
            <person name="Sato H."/>
            <person name="Nagai K."/>
            <person name="Kimura K."/>
            <person name="Makita H."/>
            <person name="Sekine M."/>
            <person name="Obayashi M."/>
            <person name="Nishi T."/>
            <person name="Shibahara T."/>
            <person name="Tanaka T."/>
            <person name="Ishii S."/>
            <person name="Yamamoto J."/>
            <person name="Saito K."/>
            <person name="Kawai Y."/>
            <person name="Isono Y."/>
            <person name="Nakamura Y."/>
            <person name="Nagahari K."/>
            <person name="Murakami K."/>
            <person name="Yasuda T."/>
            <person name="Iwayanagi T."/>
            <person name="Wagatsuma M."/>
            <person name="Shiratori A."/>
            <person name="Sudo H."/>
            <person name="Hosoiri T."/>
            <person name="Kaku Y."/>
            <person name="Kodaira H."/>
            <person name="Kondo H."/>
            <person name="Sugawara M."/>
            <person name="Takahashi M."/>
            <person name="Kanda K."/>
            <person name="Yokoi T."/>
            <person name="Furuya T."/>
            <person name="Kikkawa E."/>
            <person name="Omura Y."/>
            <person name="Abe K."/>
            <person name="Kamihara K."/>
            <person name="Katsuta N."/>
            <person name="Sato K."/>
            <person name="Tanikawa M."/>
            <person name="Yamazaki M."/>
            <person name="Ninomiya K."/>
            <person name="Ishibashi T."/>
            <person name="Yamashita H."/>
            <person name="Murakawa K."/>
            <person name="Fujimori K."/>
            <person name="Tanai H."/>
            <person name="Kimata M."/>
            <person name="Watanabe M."/>
            <person name="Hiraoka S."/>
            <person name="Chiba Y."/>
            <person name="Ishida S."/>
            <person name="Ono Y."/>
            <person name="Takiguchi S."/>
            <person name="Watanabe S."/>
            <person name="Yosida M."/>
            <person name="Hotuta T."/>
            <person name="Kusano J."/>
            <person name="Kanehori K."/>
            <person name="Takahashi-Fujii A."/>
            <person name="Hara H."/>
            <person name="Tanase T.-O."/>
            <person name="Nomura Y."/>
            <person name="Togiya S."/>
            <person name="Komai F."/>
            <person name="Hara R."/>
            <person name="Takeuchi K."/>
            <person name="Arita M."/>
            <person name="Imose N."/>
            <person name="Musashino K."/>
            <person name="Yuuki H."/>
            <person name="Oshima A."/>
            <person name="Sasaki N."/>
            <person name="Aotsuka S."/>
            <person name="Yoshikawa Y."/>
            <person name="Matsunawa H."/>
            <person name="Ichihara T."/>
            <person name="Shiohata N."/>
            <person name="Sano S."/>
            <person name="Moriya S."/>
            <person name="Momiyama H."/>
            <person name="Satoh N."/>
            <person name="Takami S."/>
            <person name="Terashima Y."/>
            <person name="Suzuki O."/>
            <person name="Nakagawa S."/>
            <person name="Senoh A."/>
            <person name="Mizoguchi H."/>
            <person name="Goto Y."/>
            <person name="Shimizu F."/>
            <person name="Wakebe H."/>
            <person name="Hishigaki H."/>
            <person name="Watanabe T."/>
            <person name="Sugiyama A."/>
            <person name="Takemoto M."/>
            <person name="Kawakami B."/>
            <person name="Yamazaki M."/>
            <person name="Watanabe K."/>
            <person name="Kumagai A."/>
            <person name="Itakura S."/>
            <person name="Fukuzumi Y."/>
            <person name="Fujimori Y."/>
            <person name="Komiyama M."/>
            <person name="Tashiro H."/>
            <person name="Tanigami A."/>
            <person name="Fujiwara T."/>
            <person name="Ono T."/>
            <person name="Yamada K."/>
            <person name="Fujii Y."/>
            <person name="Ozaki K."/>
            <person name="Hirao M."/>
            <person name="Ohmori Y."/>
            <person name="Kawabata A."/>
            <person name="Hikiji T."/>
            <person name="Kobatake N."/>
            <person name="Inagaki H."/>
            <person name="Ikema Y."/>
            <person name="Okamoto S."/>
            <person name="Okitani R."/>
            <person name="Kawakami T."/>
            <person name="Noguchi S."/>
            <person name="Itoh T."/>
            <person name="Shigeta K."/>
            <person name="Senba T."/>
            <person name="Matsumura K."/>
            <person name="Nakajima Y."/>
            <person name="Mizuno T."/>
            <person name="Morinaga M."/>
            <person name="Sasaki M."/>
            <person name="Togashi T."/>
            <person name="Oyama M."/>
            <person name="Hata H."/>
            <person name="Watanabe M."/>
            <person name="Komatsu T."/>
            <person name="Mizushima-Sugano J."/>
            <person name="Satoh T."/>
            <person name="Shirai Y."/>
            <person name="Takahashi Y."/>
            <person name="Nakagawa K."/>
            <person name="Okumura K."/>
            <person name="Nagase T."/>
            <person name="Nomura N."/>
            <person name="Kikuchi H."/>
            <person name="Masuho Y."/>
            <person name="Yamashita R."/>
            <person name="Nakai K."/>
            <person name="Yada T."/>
            <person name="Nakamura Y."/>
            <person name="Ohara O."/>
            <person name="Isogai T."/>
            <person name="Sugano S."/>
        </authorList>
    </citation>
    <scope>NUCLEOTIDE SEQUENCE [LARGE SCALE MRNA] (ISOFORM 1)</scope>
    <source>
        <tissue>Thalamus</tissue>
    </source>
</reference>
<reference key="5">
    <citation type="submission" date="2003-05" db="EMBL/GenBank/DDBJ databases">
        <title>Cloning of human full-length CDSs in BD Creator(TM) system donor vector.</title>
        <authorList>
            <person name="Kalnine N."/>
            <person name="Chen X."/>
            <person name="Rolfs A."/>
            <person name="Halleck A."/>
            <person name="Hines L."/>
            <person name="Eisenstein S."/>
            <person name="Koundinya M."/>
            <person name="Raphael J."/>
            <person name="Moreira D."/>
            <person name="Kelley T."/>
            <person name="LaBaer J."/>
            <person name="Lin Y."/>
            <person name="Phelan M."/>
            <person name="Farmer A."/>
        </authorList>
    </citation>
    <scope>NUCLEOTIDE SEQUENCE [LARGE SCALE MRNA] (ISOFORM 2)</scope>
</reference>
<reference key="6">
    <citation type="journal article" date="2004" name="Nature">
        <title>The DNA sequence and comparative analysis of human chromosome 5.</title>
        <authorList>
            <person name="Schmutz J."/>
            <person name="Martin J."/>
            <person name="Terry A."/>
            <person name="Couronne O."/>
            <person name="Grimwood J."/>
            <person name="Lowry S."/>
            <person name="Gordon L.A."/>
            <person name="Scott D."/>
            <person name="Xie G."/>
            <person name="Huang W."/>
            <person name="Hellsten U."/>
            <person name="Tran-Gyamfi M."/>
            <person name="She X."/>
            <person name="Prabhakar S."/>
            <person name="Aerts A."/>
            <person name="Altherr M."/>
            <person name="Bajorek E."/>
            <person name="Black S."/>
            <person name="Branscomb E."/>
            <person name="Caoile C."/>
            <person name="Challacombe J.F."/>
            <person name="Chan Y.M."/>
            <person name="Denys M."/>
            <person name="Detter J.C."/>
            <person name="Escobar J."/>
            <person name="Flowers D."/>
            <person name="Fotopulos D."/>
            <person name="Glavina T."/>
            <person name="Gomez M."/>
            <person name="Gonzales E."/>
            <person name="Goodstein D."/>
            <person name="Grigoriev I."/>
            <person name="Groza M."/>
            <person name="Hammon N."/>
            <person name="Hawkins T."/>
            <person name="Haydu L."/>
            <person name="Israni S."/>
            <person name="Jett J."/>
            <person name="Kadner K."/>
            <person name="Kimball H."/>
            <person name="Kobayashi A."/>
            <person name="Lopez F."/>
            <person name="Lou Y."/>
            <person name="Martinez D."/>
            <person name="Medina C."/>
            <person name="Morgan J."/>
            <person name="Nandkeshwar R."/>
            <person name="Noonan J.P."/>
            <person name="Pitluck S."/>
            <person name="Pollard M."/>
            <person name="Predki P."/>
            <person name="Priest J."/>
            <person name="Ramirez L."/>
            <person name="Retterer J."/>
            <person name="Rodriguez A."/>
            <person name="Rogers S."/>
            <person name="Salamov A."/>
            <person name="Salazar A."/>
            <person name="Thayer N."/>
            <person name="Tice H."/>
            <person name="Tsai M."/>
            <person name="Ustaszewska A."/>
            <person name="Vo N."/>
            <person name="Wheeler J."/>
            <person name="Wu K."/>
            <person name="Yang J."/>
            <person name="Dickson M."/>
            <person name="Cheng J.-F."/>
            <person name="Eichler E.E."/>
            <person name="Olsen A."/>
            <person name="Pennacchio L.A."/>
            <person name="Rokhsar D.S."/>
            <person name="Richardson P."/>
            <person name="Lucas S.M."/>
            <person name="Myers R.M."/>
            <person name="Rubin E.M."/>
        </authorList>
    </citation>
    <scope>NUCLEOTIDE SEQUENCE [LARGE SCALE GENOMIC DNA]</scope>
</reference>
<reference key="7">
    <citation type="submission" date="2005-09" db="EMBL/GenBank/DDBJ databases">
        <authorList>
            <person name="Mural R.J."/>
            <person name="Istrail S."/>
            <person name="Sutton G.G."/>
            <person name="Florea L."/>
            <person name="Halpern A.L."/>
            <person name="Mobarry C.M."/>
            <person name="Lippert R."/>
            <person name="Walenz B."/>
            <person name="Shatkay H."/>
            <person name="Dew I."/>
            <person name="Miller J.R."/>
            <person name="Flanigan M.J."/>
            <person name="Edwards N.J."/>
            <person name="Bolanos R."/>
            <person name="Fasulo D."/>
            <person name="Halldorsson B.V."/>
            <person name="Hannenhalli S."/>
            <person name="Turner R."/>
            <person name="Yooseph S."/>
            <person name="Lu F."/>
            <person name="Nusskern D.R."/>
            <person name="Shue B.C."/>
            <person name="Zheng X.H."/>
            <person name="Zhong F."/>
            <person name="Delcher A.L."/>
            <person name="Huson D.H."/>
            <person name="Kravitz S.A."/>
            <person name="Mouchard L."/>
            <person name="Reinert K."/>
            <person name="Remington K.A."/>
            <person name="Clark A.G."/>
            <person name="Waterman M.S."/>
            <person name="Eichler E.E."/>
            <person name="Adams M.D."/>
            <person name="Hunkapiller M.W."/>
            <person name="Myers E.W."/>
            <person name="Venter J.C."/>
        </authorList>
    </citation>
    <scope>NUCLEOTIDE SEQUENCE [LARGE SCALE GENOMIC DNA]</scope>
</reference>
<reference key="8">
    <citation type="journal article" date="2004" name="Genome Res.">
        <title>The status, quality, and expansion of the NIH full-length cDNA project: the Mammalian Gene Collection (MGC).</title>
        <authorList>
            <consortium name="The MGC Project Team"/>
        </authorList>
    </citation>
    <scope>NUCLEOTIDE SEQUENCE [LARGE SCALE MRNA] (ISOFORM 2)</scope>
    <source>
        <tissue>Lung</tissue>
    </source>
</reference>
<reference key="9">
    <citation type="submission" date="1997-06" db="EMBL/GenBank/DDBJ databases">
        <title>The alpha-amidating monooxygenase gene of human kidney.</title>
        <authorList>
            <person name="Chung B.H."/>
            <person name="Oh G.H."/>
            <person name="Choi E.S."/>
        </authorList>
    </citation>
    <scope>NUCLEOTIDE SEQUENCE [MRNA] OF 29-973 (ISOFORM 4)</scope>
    <source>
        <tissue>Kidney</tissue>
    </source>
</reference>
<reference key="10">
    <citation type="journal article" date="1997" name="Genome Res.">
        <title>Large-scale concatenation cDNA sequencing.</title>
        <authorList>
            <person name="Yu W."/>
            <person name="Andersson B."/>
            <person name="Worley K.C."/>
            <person name="Muzny D.M."/>
            <person name="Ding Y."/>
            <person name="Liu W."/>
            <person name="Ricafrente J.Y."/>
            <person name="Wentland M.A."/>
            <person name="Lennon G."/>
            <person name="Gibbs R.A."/>
        </authorList>
    </citation>
    <scope>NUCLEOTIDE SEQUENCE [LARGE SCALE MRNA] OF 707-973 (ISOFORM 6)</scope>
    <source>
        <tissue>Brain</tissue>
    </source>
</reference>
<reference key="11">
    <citation type="journal article" date="1990" name="Biochemistry">
        <title>Covalent modification reactions are marking steps in protein turnover.</title>
        <authorList>
            <person name="Stadtman E.R."/>
        </authorList>
    </citation>
    <scope>REVIEW</scope>
</reference>
<reference key="12">
    <citation type="journal article" date="1992" name="Annu. Rev. Neurosci.">
        <title>The biosynthesis of neuropeptides: peptide alpha-amidation.</title>
        <authorList>
            <person name="Eipper B.A."/>
            <person name="Stoffers D.A."/>
            <person name="Mains R.E."/>
        </authorList>
    </citation>
    <scope>REVIEW</scope>
</reference>
<reference key="13">
    <citation type="journal article" date="1994" name="J. Biol. Chem.">
        <title>Alternative splicing governs sulfation of tyrosine or oligosaccharide on peptidylglycine alpha-amidating monooxygenase.</title>
        <authorList>
            <person name="Yun H.Y."/>
            <person name="Keutmann H.T."/>
            <person name="Eipper B.A."/>
        </authorList>
    </citation>
    <scope>SULFATION AT TYR-875 (ISOFORM 4)</scope>
    <scope>SULFATION AT TYR-893 (ISOFORM 3)</scope>
</reference>
<reference key="14">
    <citation type="journal article" date="1999" name="J. Biol. Chem.">
        <title>The novel kinase peptidylglycine alpha-amidating monooxygenase cytosolic interactor protein 2 interacts with the cytosolic routing determinants of the peptide processing enzyme peptidylglycine alpha-amidating monooxygenase.</title>
        <authorList>
            <person name="Caldwell B.D."/>
            <person name="Darlington D.N."/>
            <person name="Penzes P."/>
            <person name="Johnson R.C."/>
            <person name="Eipper B.A."/>
            <person name="Mains R.E."/>
        </authorList>
    </citation>
    <scope>PHOSPHORYLATION AT THR-943 AND SER-946 BY UHMK1</scope>
</reference>
<reference key="15">
    <citation type="journal article" date="2006" name="Cell">
        <title>Global, in vivo, and site-specific phosphorylation dynamics in signaling networks.</title>
        <authorList>
            <person name="Olsen J.V."/>
            <person name="Blagoev B."/>
            <person name="Gnad F."/>
            <person name="Macek B."/>
            <person name="Kumar C."/>
            <person name="Mortensen P."/>
            <person name="Mann M."/>
        </authorList>
    </citation>
    <scope>PHOSPHORYLATION [LARGE SCALE ANALYSIS] AT SER-946</scope>
    <scope>IDENTIFICATION BY MASS SPECTROMETRY [LARGE SCALE ANALYSIS]</scope>
    <source>
        <tissue>Cervix carcinoma</tissue>
    </source>
</reference>
<reference key="16">
    <citation type="journal article" date="2008" name="Proc. Natl. Acad. Sci. U.S.A.">
        <title>A quantitative atlas of mitotic phosphorylation.</title>
        <authorList>
            <person name="Dephoure N."/>
            <person name="Zhou C."/>
            <person name="Villen J."/>
            <person name="Beausoleil S.A."/>
            <person name="Bakalarski C.E."/>
            <person name="Elledge S.J."/>
            <person name="Gygi S.P."/>
        </authorList>
    </citation>
    <scope>PHOSPHORYLATION [LARGE SCALE ANALYSIS] AT SER-929</scope>
    <scope>IDENTIFICATION BY MASS SPECTROMETRY [LARGE SCALE ANALYSIS]</scope>
    <source>
        <tissue>Cervix carcinoma</tissue>
    </source>
</reference>
<reference key="17">
    <citation type="journal article" date="2011" name="Sci. Signal.">
        <title>System-wide temporal characterization of the proteome and phosphoproteome of human embryonic stem cell differentiation.</title>
        <authorList>
            <person name="Rigbolt K.T."/>
            <person name="Prokhorova T.A."/>
            <person name="Akimov V."/>
            <person name="Henningsen J."/>
            <person name="Johansen P.T."/>
            <person name="Kratchmarova I."/>
            <person name="Kassem M."/>
            <person name="Mann M."/>
            <person name="Olsen J.V."/>
            <person name="Blagoev B."/>
        </authorList>
    </citation>
    <scope>PHOSPHORYLATION [LARGE SCALE ANALYSIS] AT SER-942 AND SER-946</scope>
    <scope>IDENTIFICATION BY MASS SPECTROMETRY [LARGE SCALE ANALYSIS]</scope>
</reference>
<reference key="18">
    <citation type="journal article" date="2013" name="J. Proteome Res.">
        <title>Toward a comprehensive characterization of a human cancer cell phosphoproteome.</title>
        <authorList>
            <person name="Zhou H."/>
            <person name="Di Palma S."/>
            <person name="Preisinger C."/>
            <person name="Peng M."/>
            <person name="Polat A.N."/>
            <person name="Heck A.J."/>
            <person name="Mohammed S."/>
        </authorList>
    </citation>
    <scope>PHOSPHORYLATION [LARGE SCALE ANALYSIS] AT SER-918 AND SER-929</scope>
    <scope>IDENTIFICATION BY MASS SPECTROMETRY [LARGE SCALE ANALYSIS]</scope>
    <source>
        <tissue>Cervix carcinoma</tissue>
    </source>
</reference>